<evidence type="ECO:0000255" key="1">
    <source>
        <dbReference type="HAMAP-Rule" id="MF_01161"/>
    </source>
</evidence>
<name>TILS_DEHMC</name>
<proteinExistence type="inferred from homology"/>
<reference key="1">
    <citation type="journal article" date="2005" name="Nat. Biotechnol.">
        <title>Genome sequence of the chlorinated compound-respiring bacterium Dehalococcoides species strain CBDB1.</title>
        <authorList>
            <person name="Kube M."/>
            <person name="Beck A."/>
            <person name="Zinder S.H."/>
            <person name="Kuhl H."/>
            <person name="Reinhardt R."/>
            <person name="Adrian L."/>
        </authorList>
    </citation>
    <scope>NUCLEOTIDE SEQUENCE [LARGE SCALE GENOMIC DNA]</scope>
    <source>
        <strain>CBDB1</strain>
    </source>
</reference>
<organism>
    <name type="scientific">Dehalococcoides mccartyi (strain CBDB1)</name>
    <dbReference type="NCBI Taxonomy" id="255470"/>
    <lineage>
        <taxon>Bacteria</taxon>
        <taxon>Bacillati</taxon>
        <taxon>Chloroflexota</taxon>
        <taxon>Dehalococcoidia</taxon>
        <taxon>Dehalococcoidales</taxon>
        <taxon>Dehalococcoidaceae</taxon>
        <taxon>Dehalococcoides</taxon>
    </lineage>
</organism>
<gene>
    <name evidence="1" type="primary">tilS</name>
    <name type="ordered locus">cbdbA1385</name>
</gene>
<sequence>MLTERVSKYIKKQGLVSAGDEILLAVSGGPDSVCMLYIMHKLSREMGFSLRLAHLNHGLRAEESDRDAAYVTELASALGLPLCQQKVSVKAYQAEHHLSLEEAAREMRYAFLCRTAAEFGSAAVAVGHTLDDNIETVMLHLVRGSGTRGLQGLRPVLNRTIAGAGCLRVIRPLLCLGRAETQVYCREAGLLPRQDITNLSTEPLRNRIRLEVLPLLKTINPAFEETILRTAFIAGEEMALLDEVTSQMKAELVIRQDDVLMIEKIEMQRLHPALKRNLLRQMMEELLGGLKDIEARHIENIVQTMDKPAGRRIDLPYKLVFQVDYEHYLLGWGIDELCPYPPCQGEYRLGVGTETFLDGWVVKTEILPSPIGLDLSESSLVAYLDMDKAGTDLIVRTRAEGDQFQPLGMEDAKSLKEFMIDNKIPRNWRARVPLLISSKEILWLVGYRIGESAKVDENTRRVLRVEFRLLG</sequence>
<feature type="chain" id="PRO_1000065609" description="tRNA(Ile)-lysidine synthase">
    <location>
        <begin position="1"/>
        <end position="471"/>
    </location>
</feature>
<feature type="binding site" evidence="1">
    <location>
        <begin position="27"/>
        <end position="32"/>
    </location>
    <ligand>
        <name>ATP</name>
        <dbReference type="ChEBI" id="CHEBI:30616"/>
    </ligand>
</feature>
<comment type="function">
    <text evidence="1">Ligates lysine onto the cytidine present at position 34 of the AUA codon-specific tRNA(Ile) that contains the anticodon CAU, in an ATP-dependent manner. Cytidine is converted to lysidine, thus changing the amino acid specificity of the tRNA from methionine to isoleucine.</text>
</comment>
<comment type="catalytic activity">
    <reaction evidence="1">
        <text>cytidine(34) in tRNA(Ile2) + L-lysine + ATP = lysidine(34) in tRNA(Ile2) + AMP + diphosphate + H(+)</text>
        <dbReference type="Rhea" id="RHEA:43744"/>
        <dbReference type="Rhea" id="RHEA-COMP:10625"/>
        <dbReference type="Rhea" id="RHEA-COMP:10670"/>
        <dbReference type="ChEBI" id="CHEBI:15378"/>
        <dbReference type="ChEBI" id="CHEBI:30616"/>
        <dbReference type="ChEBI" id="CHEBI:32551"/>
        <dbReference type="ChEBI" id="CHEBI:33019"/>
        <dbReference type="ChEBI" id="CHEBI:82748"/>
        <dbReference type="ChEBI" id="CHEBI:83665"/>
        <dbReference type="ChEBI" id="CHEBI:456215"/>
        <dbReference type="EC" id="6.3.4.19"/>
    </reaction>
</comment>
<comment type="subcellular location">
    <subcellularLocation>
        <location evidence="1">Cytoplasm</location>
    </subcellularLocation>
</comment>
<comment type="domain">
    <text>The N-terminal region contains the highly conserved SGGXDS motif, predicted to be a P-loop motif involved in ATP binding.</text>
</comment>
<comment type="similarity">
    <text evidence="1">Belongs to the tRNA(Ile)-lysidine synthase family.</text>
</comment>
<dbReference type="EC" id="6.3.4.19" evidence="1"/>
<dbReference type="EMBL" id="AJ965256">
    <property type="protein sequence ID" value="CAI83429.1"/>
    <property type="molecule type" value="Genomic_DNA"/>
</dbReference>
<dbReference type="SMR" id="Q3ZYX5"/>
<dbReference type="KEGG" id="deh:cbdbA1385"/>
<dbReference type="HOGENOM" id="CLU_018869_0_1_0"/>
<dbReference type="Proteomes" id="UP000000433">
    <property type="component" value="Chromosome"/>
</dbReference>
<dbReference type="GO" id="GO:0005737">
    <property type="term" value="C:cytoplasm"/>
    <property type="evidence" value="ECO:0007669"/>
    <property type="project" value="UniProtKB-SubCell"/>
</dbReference>
<dbReference type="GO" id="GO:0005524">
    <property type="term" value="F:ATP binding"/>
    <property type="evidence" value="ECO:0007669"/>
    <property type="project" value="UniProtKB-UniRule"/>
</dbReference>
<dbReference type="GO" id="GO:0032267">
    <property type="term" value="F:tRNA(Ile)-lysidine synthase activity"/>
    <property type="evidence" value="ECO:0007669"/>
    <property type="project" value="UniProtKB-EC"/>
</dbReference>
<dbReference type="GO" id="GO:0006400">
    <property type="term" value="P:tRNA modification"/>
    <property type="evidence" value="ECO:0007669"/>
    <property type="project" value="UniProtKB-UniRule"/>
</dbReference>
<dbReference type="CDD" id="cd01992">
    <property type="entry name" value="TilS_N"/>
    <property type="match status" value="1"/>
</dbReference>
<dbReference type="Gene3D" id="1.20.59.20">
    <property type="match status" value="1"/>
</dbReference>
<dbReference type="Gene3D" id="3.40.50.620">
    <property type="entry name" value="HUPs"/>
    <property type="match status" value="1"/>
</dbReference>
<dbReference type="HAMAP" id="MF_01161">
    <property type="entry name" value="tRNA_Ile_lys_synt"/>
    <property type="match status" value="1"/>
</dbReference>
<dbReference type="InterPro" id="IPR012796">
    <property type="entry name" value="Lysidine-tRNA-synth_C"/>
</dbReference>
<dbReference type="InterPro" id="IPR014729">
    <property type="entry name" value="Rossmann-like_a/b/a_fold"/>
</dbReference>
<dbReference type="InterPro" id="IPR011063">
    <property type="entry name" value="TilS/TtcA_N"/>
</dbReference>
<dbReference type="InterPro" id="IPR012094">
    <property type="entry name" value="tRNA_Ile_lys_synt"/>
</dbReference>
<dbReference type="InterPro" id="IPR012795">
    <property type="entry name" value="tRNA_Ile_lys_synt_N"/>
</dbReference>
<dbReference type="InterPro" id="IPR015262">
    <property type="entry name" value="tRNA_Ile_lys_synt_subst-bd"/>
</dbReference>
<dbReference type="NCBIfam" id="TIGR02433">
    <property type="entry name" value="lysidine_TilS_C"/>
    <property type="match status" value="1"/>
</dbReference>
<dbReference type="NCBIfam" id="TIGR02432">
    <property type="entry name" value="lysidine_TilS_N"/>
    <property type="match status" value="1"/>
</dbReference>
<dbReference type="PANTHER" id="PTHR43033">
    <property type="entry name" value="TRNA(ILE)-LYSIDINE SYNTHASE-RELATED"/>
    <property type="match status" value="1"/>
</dbReference>
<dbReference type="PANTHER" id="PTHR43033:SF1">
    <property type="entry name" value="TRNA(ILE)-LYSIDINE SYNTHASE-RELATED"/>
    <property type="match status" value="1"/>
</dbReference>
<dbReference type="Pfam" id="PF01171">
    <property type="entry name" value="ATP_bind_3"/>
    <property type="match status" value="1"/>
</dbReference>
<dbReference type="Pfam" id="PF09179">
    <property type="entry name" value="TilS"/>
    <property type="match status" value="1"/>
</dbReference>
<dbReference type="Pfam" id="PF11734">
    <property type="entry name" value="TilS_C"/>
    <property type="match status" value="1"/>
</dbReference>
<dbReference type="SMART" id="SM00977">
    <property type="entry name" value="TilS_C"/>
    <property type="match status" value="1"/>
</dbReference>
<dbReference type="SUPFAM" id="SSF52402">
    <property type="entry name" value="Adenine nucleotide alpha hydrolases-like"/>
    <property type="match status" value="1"/>
</dbReference>
<dbReference type="SUPFAM" id="SSF82829">
    <property type="entry name" value="MesJ substrate recognition domain-like"/>
    <property type="match status" value="1"/>
</dbReference>
<dbReference type="SUPFAM" id="SSF56037">
    <property type="entry name" value="PheT/TilS domain"/>
    <property type="match status" value="1"/>
</dbReference>
<accession>Q3ZYX5</accession>
<keyword id="KW-0067">ATP-binding</keyword>
<keyword id="KW-0963">Cytoplasm</keyword>
<keyword id="KW-0436">Ligase</keyword>
<keyword id="KW-0547">Nucleotide-binding</keyword>
<keyword id="KW-0819">tRNA processing</keyword>
<protein>
    <recommendedName>
        <fullName evidence="1">tRNA(Ile)-lysidine synthase</fullName>
        <ecNumber evidence="1">6.3.4.19</ecNumber>
    </recommendedName>
    <alternativeName>
        <fullName evidence="1">tRNA(Ile)-2-lysyl-cytidine synthase</fullName>
    </alternativeName>
    <alternativeName>
        <fullName evidence="1">tRNA(Ile)-lysidine synthetase</fullName>
    </alternativeName>
</protein>